<accession>Q6QBP2</accession>
<gene>
    <name evidence="1" type="primary">atpB</name>
</gene>
<sequence length="498" mass="53828">MRINPTTSDPGVSALEKKNLGRIAQIIGPVLDVTFPPRKMPNIYNALVVKGRDTAGQQINVTCEVQQLLGNNRVRAVAMSATDGLMRGMEVIDTGAPLSVPVGGATLGRIFNVLGEPVDNLGPVDTRTTSPIHRSAPAFIQLDTKLSIFETGIKVVDLLAPYRRGGKIGLFGGAGVGKTVLIMELINNIAKAHGGVSVFGGVGERTREGNDLYMEMKESGVINEQNIAESKVALVYGQMNEPPGARMRVGLTALTMAEYFRDVNEQDVLLFIDNIFRFVQAGSEVSALLGRMPSAVGYQPTLSTEMGSLQERITSTKEGSITSIQAVYVPADDLTDPAPATTFAHLDATTVLSRGLAAKGIYPAVDPLDSTSTMLQPRIVGEEHYETAQRVKQTLQRYKELQDIIAILGLDELSEEDRLTVARARKIERFLSQPFFVAEVFTGSPGKYVGLSETIRGFKLILSGELDGLPEQAFYLVGNIDEATAKATNLEMESKLKQ</sequence>
<geneLocation type="chloroplast"/>
<evidence type="ECO:0000255" key="1">
    <source>
        <dbReference type="HAMAP-Rule" id="MF_01347"/>
    </source>
</evidence>
<dbReference type="EC" id="7.1.2.2" evidence="1"/>
<dbReference type="EMBL" id="AY548965">
    <property type="protein sequence ID" value="AAS55870.1"/>
    <property type="molecule type" value="Genomic_DNA"/>
</dbReference>
<dbReference type="RefSeq" id="YP_010041517.1">
    <property type="nucleotide sequence ID" value="NC_054204.1"/>
</dbReference>
<dbReference type="SMR" id="Q6QBP2"/>
<dbReference type="GeneID" id="63648120"/>
<dbReference type="GO" id="GO:0009535">
    <property type="term" value="C:chloroplast thylakoid membrane"/>
    <property type="evidence" value="ECO:0007669"/>
    <property type="project" value="UniProtKB-SubCell"/>
</dbReference>
<dbReference type="GO" id="GO:0005739">
    <property type="term" value="C:mitochondrion"/>
    <property type="evidence" value="ECO:0007669"/>
    <property type="project" value="GOC"/>
</dbReference>
<dbReference type="GO" id="GO:0045259">
    <property type="term" value="C:proton-transporting ATP synthase complex"/>
    <property type="evidence" value="ECO:0007669"/>
    <property type="project" value="UniProtKB-KW"/>
</dbReference>
<dbReference type="GO" id="GO:0005524">
    <property type="term" value="F:ATP binding"/>
    <property type="evidence" value="ECO:0007669"/>
    <property type="project" value="UniProtKB-UniRule"/>
</dbReference>
<dbReference type="GO" id="GO:0016887">
    <property type="term" value="F:ATP hydrolysis activity"/>
    <property type="evidence" value="ECO:0007669"/>
    <property type="project" value="InterPro"/>
</dbReference>
<dbReference type="GO" id="GO:0046933">
    <property type="term" value="F:proton-transporting ATP synthase activity, rotational mechanism"/>
    <property type="evidence" value="ECO:0007669"/>
    <property type="project" value="UniProtKB-UniRule"/>
</dbReference>
<dbReference type="GO" id="GO:0042776">
    <property type="term" value="P:proton motive force-driven mitochondrial ATP synthesis"/>
    <property type="evidence" value="ECO:0007669"/>
    <property type="project" value="TreeGrafter"/>
</dbReference>
<dbReference type="CDD" id="cd18110">
    <property type="entry name" value="ATP-synt_F1_beta_C"/>
    <property type="match status" value="1"/>
</dbReference>
<dbReference type="CDD" id="cd18115">
    <property type="entry name" value="ATP-synt_F1_beta_N"/>
    <property type="match status" value="1"/>
</dbReference>
<dbReference type="CDD" id="cd01133">
    <property type="entry name" value="F1-ATPase_beta_CD"/>
    <property type="match status" value="1"/>
</dbReference>
<dbReference type="FunFam" id="1.10.1140.10:FF:000001">
    <property type="entry name" value="ATP synthase subunit beta"/>
    <property type="match status" value="1"/>
</dbReference>
<dbReference type="FunFam" id="3.40.50.300:FF:000004">
    <property type="entry name" value="ATP synthase subunit beta"/>
    <property type="match status" value="1"/>
</dbReference>
<dbReference type="FunFam" id="2.40.10.170:FF:000002">
    <property type="entry name" value="ATP synthase subunit beta, chloroplastic"/>
    <property type="match status" value="1"/>
</dbReference>
<dbReference type="Gene3D" id="2.40.10.170">
    <property type="match status" value="1"/>
</dbReference>
<dbReference type="Gene3D" id="1.10.1140.10">
    <property type="entry name" value="Bovine Mitochondrial F1-atpase, Atp Synthase Beta Chain, Chain D, domain 3"/>
    <property type="match status" value="1"/>
</dbReference>
<dbReference type="Gene3D" id="3.40.50.300">
    <property type="entry name" value="P-loop containing nucleotide triphosphate hydrolases"/>
    <property type="match status" value="1"/>
</dbReference>
<dbReference type="HAMAP" id="MF_01347">
    <property type="entry name" value="ATP_synth_beta_bact"/>
    <property type="match status" value="1"/>
</dbReference>
<dbReference type="InterPro" id="IPR003593">
    <property type="entry name" value="AAA+_ATPase"/>
</dbReference>
<dbReference type="InterPro" id="IPR055190">
    <property type="entry name" value="ATP-synt_VA_C"/>
</dbReference>
<dbReference type="InterPro" id="IPR005722">
    <property type="entry name" value="ATP_synth_F1_bsu"/>
</dbReference>
<dbReference type="InterPro" id="IPR020003">
    <property type="entry name" value="ATPase_a/bsu_AS"/>
</dbReference>
<dbReference type="InterPro" id="IPR050053">
    <property type="entry name" value="ATPase_alpha/beta_chains"/>
</dbReference>
<dbReference type="InterPro" id="IPR004100">
    <property type="entry name" value="ATPase_F1/V1/A1_a/bsu_N"/>
</dbReference>
<dbReference type="InterPro" id="IPR036121">
    <property type="entry name" value="ATPase_F1/V1/A1_a/bsu_N_sf"/>
</dbReference>
<dbReference type="InterPro" id="IPR000194">
    <property type="entry name" value="ATPase_F1/V1/A1_a/bsu_nucl-bd"/>
</dbReference>
<dbReference type="InterPro" id="IPR024034">
    <property type="entry name" value="ATPase_F1/V1_b/a_C"/>
</dbReference>
<dbReference type="InterPro" id="IPR027417">
    <property type="entry name" value="P-loop_NTPase"/>
</dbReference>
<dbReference type="NCBIfam" id="TIGR01039">
    <property type="entry name" value="atpD"/>
    <property type="match status" value="1"/>
</dbReference>
<dbReference type="PANTHER" id="PTHR15184">
    <property type="entry name" value="ATP SYNTHASE"/>
    <property type="match status" value="1"/>
</dbReference>
<dbReference type="PANTHER" id="PTHR15184:SF71">
    <property type="entry name" value="ATP SYNTHASE SUBUNIT BETA, MITOCHONDRIAL"/>
    <property type="match status" value="1"/>
</dbReference>
<dbReference type="Pfam" id="PF00006">
    <property type="entry name" value="ATP-synt_ab"/>
    <property type="match status" value="1"/>
</dbReference>
<dbReference type="Pfam" id="PF02874">
    <property type="entry name" value="ATP-synt_ab_N"/>
    <property type="match status" value="1"/>
</dbReference>
<dbReference type="Pfam" id="PF22919">
    <property type="entry name" value="ATP-synt_VA_C"/>
    <property type="match status" value="1"/>
</dbReference>
<dbReference type="SMART" id="SM00382">
    <property type="entry name" value="AAA"/>
    <property type="match status" value="1"/>
</dbReference>
<dbReference type="SUPFAM" id="SSF47917">
    <property type="entry name" value="C-terminal domain of alpha and beta subunits of F1 ATP synthase"/>
    <property type="match status" value="1"/>
</dbReference>
<dbReference type="SUPFAM" id="SSF50615">
    <property type="entry name" value="N-terminal domain of alpha and beta subunits of F1 ATP synthase"/>
    <property type="match status" value="1"/>
</dbReference>
<dbReference type="SUPFAM" id="SSF52540">
    <property type="entry name" value="P-loop containing nucleoside triphosphate hydrolases"/>
    <property type="match status" value="1"/>
</dbReference>
<dbReference type="PROSITE" id="PS00152">
    <property type="entry name" value="ATPASE_ALPHA_BETA"/>
    <property type="match status" value="1"/>
</dbReference>
<keyword id="KW-0066">ATP synthesis</keyword>
<keyword id="KW-0067">ATP-binding</keyword>
<keyword id="KW-0139">CF(1)</keyword>
<keyword id="KW-0150">Chloroplast</keyword>
<keyword id="KW-0375">Hydrogen ion transport</keyword>
<keyword id="KW-0406">Ion transport</keyword>
<keyword id="KW-0472">Membrane</keyword>
<keyword id="KW-0547">Nucleotide-binding</keyword>
<keyword id="KW-0934">Plastid</keyword>
<keyword id="KW-0793">Thylakoid</keyword>
<keyword id="KW-1278">Translocase</keyword>
<keyword id="KW-0813">Transport</keyword>
<reference key="1">
    <citation type="journal article" date="2005" name="PLoS Biol.">
        <title>Relaxed molecular clock provides evidence for long-distance dispersal of Nothofagus (southern beech).</title>
        <authorList>
            <person name="Knapp M."/>
            <person name="Stockler K."/>
            <person name="Havell D."/>
            <person name="Delsuc F."/>
            <person name="Sebastiani F."/>
            <person name="Lockhart P.J."/>
        </authorList>
    </citation>
    <scope>NUCLEOTIDE SEQUENCE [GENOMIC DNA]</scope>
</reference>
<protein>
    <recommendedName>
        <fullName evidence="1">ATP synthase subunit beta, chloroplastic</fullName>
        <ecNumber evidence="1">7.1.2.2</ecNumber>
    </recommendedName>
    <alternativeName>
        <fullName evidence="1">ATP synthase F1 sector subunit beta</fullName>
    </alternativeName>
    <alternativeName>
        <fullName evidence="1">F-ATPase subunit beta</fullName>
    </alternativeName>
</protein>
<comment type="function">
    <text evidence="1">Produces ATP from ADP in the presence of a proton gradient across the membrane. The catalytic sites are hosted primarily by the beta subunits.</text>
</comment>
<comment type="catalytic activity">
    <reaction evidence="1">
        <text>ATP + H2O + 4 H(+)(in) = ADP + phosphate + 5 H(+)(out)</text>
        <dbReference type="Rhea" id="RHEA:57720"/>
        <dbReference type="ChEBI" id="CHEBI:15377"/>
        <dbReference type="ChEBI" id="CHEBI:15378"/>
        <dbReference type="ChEBI" id="CHEBI:30616"/>
        <dbReference type="ChEBI" id="CHEBI:43474"/>
        <dbReference type="ChEBI" id="CHEBI:456216"/>
        <dbReference type="EC" id="7.1.2.2"/>
    </reaction>
</comment>
<comment type="subunit">
    <text evidence="1">F-type ATPases have 2 components, CF(1) - the catalytic core - and CF(0) - the membrane proton channel. CF(1) has five subunits: alpha(3), beta(3), gamma(1), delta(1), epsilon(1). CF(0) has four main subunits: a(1), b(1), b'(1) and c(9-12).</text>
</comment>
<comment type="subcellular location">
    <subcellularLocation>
        <location evidence="1">Plastid</location>
        <location evidence="1">Chloroplast thylakoid membrane</location>
        <topology evidence="1">Peripheral membrane protein</topology>
    </subcellularLocation>
</comment>
<comment type="similarity">
    <text evidence="1">Belongs to the ATPase alpha/beta chains family.</text>
</comment>
<feature type="chain" id="PRO_0000254457" description="ATP synthase subunit beta, chloroplastic">
    <location>
        <begin position="1"/>
        <end position="498"/>
    </location>
</feature>
<feature type="binding site" evidence="1">
    <location>
        <begin position="172"/>
        <end position="179"/>
    </location>
    <ligand>
        <name>ATP</name>
        <dbReference type="ChEBI" id="CHEBI:30616"/>
    </ligand>
</feature>
<proteinExistence type="inferred from homology"/>
<name>ATPB_CASSA</name>
<organism>
    <name type="scientific">Castanea sativa</name>
    <name type="common">Sweet chestnut</name>
    <dbReference type="NCBI Taxonomy" id="21020"/>
    <lineage>
        <taxon>Eukaryota</taxon>
        <taxon>Viridiplantae</taxon>
        <taxon>Streptophyta</taxon>
        <taxon>Embryophyta</taxon>
        <taxon>Tracheophyta</taxon>
        <taxon>Spermatophyta</taxon>
        <taxon>Magnoliopsida</taxon>
        <taxon>eudicotyledons</taxon>
        <taxon>Gunneridae</taxon>
        <taxon>Pentapetalae</taxon>
        <taxon>rosids</taxon>
        <taxon>fabids</taxon>
        <taxon>Fagales</taxon>
        <taxon>Fagaceae</taxon>
        <taxon>Castanea</taxon>
    </lineage>
</organism>